<proteinExistence type="inferred from homology"/>
<organism>
    <name type="scientific">Staphylococcus aureus (strain JH9)</name>
    <dbReference type="NCBI Taxonomy" id="359786"/>
    <lineage>
        <taxon>Bacteria</taxon>
        <taxon>Bacillati</taxon>
        <taxon>Bacillota</taxon>
        <taxon>Bacilli</taxon>
        <taxon>Bacillales</taxon>
        <taxon>Staphylococcaceae</taxon>
        <taxon>Staphylococcus</taxon>
    </lineage>
</organism>
<accession>A5ITM3</accession>
<reference key="1">
    <citation type="submission" date="2007-05" db="EMBL/GenBank/DDBJ databases">
        <title>Complete sequence of chromosome of Staphylococcus aureus subsp. aureus JH9.</title>
        <authorList>
            <consortium name="US DOE Joint Genome Institute"/>
            <person name="Copeland A."/>
            <person name="Lucas S."/>
            <person name="Lapidus A."/>
            <person name="Barry K."/>
            <person name="Detter J.C."/>
            <person name="Glavina del Rio T."/>
            <person name="Hammon N."/>
            <person name="Israni S."/>
            <person name="Pitluck S."/>
            <person name="Chain P."/>
            <person name="Malfatti S."/>
            <person name="Shin M."/>
            <person name="Vergez L."/>
            <person name="Schmutz J."/>
            <person name="Larimer F."/>
            <person name="Land M."/>
            <person name="Hauser L."/>
            <person name="Kyrpides N."/>
            <person name="Kim E."/>
            <person name="Tomasz A."/>
            <person name="Richardson P."/>
        </authorList>
    </citation>
    <scope>NUCLEOTIDE SEQUENCE [LARGE SCALE GENOMIC DNA]</scope>
    <source>
        <strain>JH9</strain>
    </source>
</reference>
<gene>
    <name evidence="1" type="primary">accA</name>
    <name type="ordered locus">SaurJH9_1756</name>
</gene>
<evidence type="ECO:0000255" key="1">
    <source>
        <dbReference type="HAMAP-Rule" id="MF_00823"/>
    </source>
</evidence>
<evidence type="ECO:0000255" key="2">
    <source>
        <dbReference type="PROSITE-ProRule" id="PRU01137"/>
    </source>
</evidence>
<comment type="function">
    <text evidence="1">Component of the acetyl coenzyme A carboxylase (ACC) complex. First, biotin carboxylase catalyzes the carboxylation of biotin on its carrier protein (BCCP) and then the CO(2) group is transferred by the carboxyltransferase to acetyl-CoA to form malonyl-CoA.</text>
</comment>
<comment type="catalytic activity">
    <reaction evidence="1">
        <text>N(6)-carboxybiotinyl-L-lysyl-[protein] + acetyl-CoA = N(6)-biotinyl-L-lysyl-[protein] + malonyl-CoA</text>
        <dbReference type="Rhea" id="RHEA:54728"/>
        <dbReference type="Rhea" id="RHEA-COMP:10505"/>
        <dbReference type="Rhea" id="RHEA-COMP:10506"/>
        <dbReference type="ChEBI" id="CHEBI:57288"/>
        <dbReference type="ChEBI" id="CHEBI:57384"/>
        <dbReference type="ChEBI" id="CHEBI:83144"/>
        <dbReference type="ChEBI" id="CHEBI:83145"/>
        <dbReference type="EC" id="2.1.3.15"/>
    </reaction>
</comment>
<comment type="pathway">
    <text evidence="1">Lipid metabolism; malonyl-CoA biosynthesis; malonyl-CoA from acetyl-CoA: step 1/1.</text>
</comment>
<comment type="subunit">
    <text evidence="1">Acetyl-CoA carboxylase is a heterohexamer composed of biotin carboxyl carrier protein (AccB), biotin carboxylase (AccC) and two subunits each of ACCase subunit alpha (AccA) and ACCase subunit beta (AccD).</text>
</comment>
<comment type="subcellular location">
    <subcellularLocation>
        <location evidence="1">Cytoplasm</location>
    </subcellularLocation>
</comment>
<comment type="similarity">
    <text evidence="1">Belongs to the AccA family.</text>
</comment>
<sequence>MLDFEKPLFEIRNKIESLKESQDKNDVDLQEEIDMLEASLERETKKIYTNLKPWDRVQIARLQERPTTLDYIPYIFDSFMELHGDRNFRDDPAMIGGIGFLNGRAVTVIGQQRGKDTKDNIYRNFGMAHPEGYRKALRLMKQAEKFNRPIFTFIDTKGAYPGKAAEERGQSESIATNLIEMASLKVPVIAIVIGEGGSGGALGIGIANKVLMLENSTYSVISPEGAAALLWKDSNLAKIAAETMKITAHDIKQLGIIDDVISEPLGGAHKDVEQQALAIKSAFVAQLDSLESLSRDEIANDRFEKFRNIGSYIE</sequence>
<dbReference type="EC" id="2.1.3.15" evidence="1"/>
<dbReference type="EMBL" id="CP000703">
    <property type="protein sequence ID" value="ABQ49546.1"/>
    <property type="molecule type" value="Genomic_DNA"/>
</dbReference>
<dbReference type="RefSeq" id="WP_000883648.1">
    <property type="nucleotide sequence ID" value="NC_009487.1"/>
</dbReference>
<dbReference type="SMR" id="A5ITM3"/>
<dbReference type="KEGG" id="saj:SaurJH9_1756"/>
<dbReference type="HOGENOM" id="CLU_015486_0_2_9"/>
<dbReference type="UniPathway" id="UPA00655">
    <property type="reaction ID" value="UER00711"/>
</dbReference>
<dbReference type="GO" id="GO:0009317">
    <property type="term" value="C:acetyl-CoA carboxylase complex"/>
    <property type="evidence" value="ECO:0007669"/>
    <property type="project" value="InterPro"/>
</dbReference>
<dbReference type="GO" id="GO:0003989">
    <property type="term" value="F:acetyl-CoA carboxylase activity"/>
    <property type="evidence" value="ECO:0007669"/>
    <property type="project" value="InterPro"/>
</dbReference>
<dbReference type="GO" id="GO:0005524">
    <property type="term" value="F:ATP binding"/>
    <property type="evidence" value="ECO:0007669"/>
    <property type="project" value="UniProtKB-KW"/>
</dbReference>
<dbReference type="GO" id="GO:0016743">
    <property type="term" value="F:carboxyl- or carbamoyltransferase activity"/>
    <property type="evidence" value="ECO:0007669"/>
    <property type="project" value="UniProtKB-UniRule"/>
</dbReference>
<dbReference type="GO" id="GO:0006633">
    <property type="term" value="P:fatty acid biosynthetic process"/>
    <property type="evidence" value="ECO:0007669"/>
    <property type="project" value="UniProtKB-KW"/>
</dbReference>
<dbReference type="GO" id="GO:2001295">
    <property type="term" value="P:malonyl-CoA biosynthetic process"/>
    <property type="evidence" value="ECO:0007669"/>
    <property type="project" value="UniProtKB-UniRule"/>
</dbReference>
<dbReference type="Gene3D" id="3.90.226.10">
    <property type="entry name" value="2-enoyl-CoA Hydratase, Chain A, domain 1"/>
    <property type="match status" value="1"/>
</dbReference>
<dbReference type="HAMAP" id="MF_00823">
    <property type="entry name" value="AcetylCoA_CT_alpha"/>
    <property type="match status" value="1"/>
</dbReference>
<dbReference type="InterPro" id="IPR001095">
    <property type="entry name" value="Acetyl_CoA_COase_a_su"/>
</dbReference>
<dbReference type="InterPro" id="IPR029045">
    <property type="entry name" value="ClpP/crotonase-like_dom_sf"/>
</dbReference>
<dbReference type="InterPro" id="IPR011763">
    <property type="entry name" value="COA_CT_C"/>
</dbReference>
<dbReference type="NCBIfam" id="TIGR00513">
    <property type="entry name" value="accA"/>
    <property type="match status" value="1"/>
</dbReference>
<dbReference type="NCBIfam" id="NF041504">
    <property type="entry name" value="AccA_sub"/>
    <property type="match status" value="1"/>
</dbReference>
<dbReference type="NCBIfam" id="NF004344">
    <property type="entry name" value="PRK05724.1"/>
    <property type="match status" value="1"/>
</dbReference>
<dbReference type="PANTHER" id="PTHR42853">
    <property type="entry name" value="ACETYL-COENZYME A CARBOXYLASE CARBOXYL TRANSFERASE SUBUNIT ALPHA"/>
    <property type="match status" value="1"/>
</dbReference>
<dbReference type="PANTHER" id="PTHR42853:SF3">
    <property type="entry name" value="ACETYL-COENZYME A CARBOXYLASE CARBOXYL TRANSFERASE SUBUNIT ALPHA, CHLOROPLASTIC"/>
    <property type="match status" value="1"/>
</dbReference>
<dbReference type="Pfam" id="PF03255">
    <property type="entry name" value="ACCA"/>
    <property type="match status" value="1"/>
</dbReference>
<dbReference type="PRINTS" id="PR01069">
    <property type="entry name" value="ACCCTRFRASEA"/>
</dbReference>
<dbReference type="SUPFAM" id="SSF52096">
    <property type="entry name" value="ClpP/crotonase"/>
    <property type="match status" value="1"/>
</dbReference>
<dbReference type="PROSITE" id="PS50989">
    <property type="entry name" value="COA_CT_CTER"/>
    <property type="match status" value="1"/>
</dbReference>
<feature type="chain" id="PRO_1000083937" description="Acetyl-coenzyme A carboxylase carboxyl transferase subunit alpha">
    <location>
        <begin position="1"/>
        <end position="314"/>
    </location>
</feature>
<feature type="domain" description="CoA carboxyltransferase C-terminal" evidence="2">
    <location>
        <begin position="32"/>
        <end position="289"/>
    </location>
</feature>
<keyword id="KW-0067">ATP-binding</keyword>
<keyword id="KW-0963">Cytoplasm</keyword>
<keyword id="KW-0275">Fatty acid biosynthesis</keyword>
<keyword id="KW-0276">Fatty acid metabolism</keyword>
<keyword id="KW-0444">Lipid biosynthesis</keyword>
<keyword id="KW-0443">Lipid metabolism</keyword>
<keyword id="KW-0547">Nucleotide-binding</keyword>
<keyword id="KW-0808">Transferase</keyword>
<name>ACCA_STAA9</name>
<protein>
    <recommendedName>
        <fullName evidence="1">Acetyl-coenzyme A carboxylase carboxyl transferase subunit alpha</fullName>
        <shortName evidence="1">ACCase subunit alpha</shortName>
        <shortName evidence="1">Acetyl-CoA carboxylase carboxyltransferase subunit alpha</shortName>
        <ecNumber evidence="1">2.1.3.15</ecNumber>
    </recommendedName>
</protein>